<proteinExistence type="inferred from homology"/>
<name>SECA_ECOLU</name>
<dbReference type="EC" id="7.4.2.8" evidence="1"/>
<dbReference type="EMBL" id="CU928163">
    <property type="protein sequence ID" value="CAR11321.1"/>
    <property type="molecule type" value="Genomic_DNA"/>
</dbReference>
<dbReference type="RefSeq" id="WP_000905780.1">
    <property type="nucleotide sequence ID" value="NC_011751.1"/>
</dbReference>
<dbReference type="RefSeq" id="YP_002410877.1">
    <property type="nucleotide sequence ID" value="NC_011751.1"/>
</dbReference>
<dbReference type="SMR" id="B7N7X1"/>
<dbReference type="STRING" id="585056.ECUMN_0098"/>
<dbReference type="KEGG" id="eum:ECUMN_0098"/>
<dbReference type="PATRIC" id="fig|585056.7.peg.289"/>
<dbReference type="HOGENOM" id="CLU_005314_3_0_6"/>
<dbReference type="Proteomes" id="UP000007097">
    <property type="component" value="Chromosome"/>
</dbReference>
<dbReference type="GO" id="GO:0031522">
    <property type="term" value="C:cell envelope Sec protein transport complex"/>
    <property type="evidence" value="ECO:0007669"/>
    <property type="project" value="TreeGrafter"/>
</dbReference>
<dbReference type="GO" id="GO:0005829">
    <property type="term" value="C:cytosol"/>
    <property type="evidence" value="ECO:0007669"/>
    <property type="project" value="TreeGrafter"/>
</dbReference>
<dbReference type="GO" id="GO:0005886">
    <property type="term" value="C:plasma membrane"/>
    <property type="evidence" value="ECO:0007669"/>
    <property type="project" value="UniProtKB-SubCell"/>
</dbReference>
<dbReference type="GO" id="GO:0005524">
    <property type="term" value="F:ATP binding"/>
    <property type="evidence" value="ECO:0007669"/>
    <property type="project" value="UniProtKB-UniRule"/>
</dbReference>
<dbReference type="GO" id="GO:0046872">
    <property type="term" value="F:metal ion binding"/>
    <property type="evidence" value="ECO:0007669"/>
    <property type="project" value="UniProtKB-KW"/>
</dbReference>
<dbReference type="GO" id="GO:0008564">
    <property type="term" value="F:protein-exporting ATPase activity"/>
    <property type="evidence" value="ECO:0007669"/>
    <property type="project" value="UniProtKB-EC"/>
</dbReference>
<dbReference type="GO" id="GO:0065002">
    <property type="term" value="P:intracellular protein transmembrane transport"/>
    <property type="evidence" value="ECO:0007669"/>
    <property type="project" value="UniProtKB-UniRule"/>
</dbReference>
<dbReference type="GO" id="GO:0017038">
    <property type="term" value="P:protein import"/>
    <property type="evidence" value="ECO:0007669"/>
    <property type="project" value="InterPro"/>
</dbReference>
<dbReference type="GO" id="GO:0006605">
    <property type="term" value="P:protein targeting"/>
    <property type="evidence" value="ECO:0007669"/>
    <property type="project" value="UniProtKB-UniRule"/>
</dbReference>
<dbReference type="GO" id="GO:0043952">
    <property type="term" value="P:protein transport by the Sec complex"/>
    <property type="evidence" value="ECO:0007669"/>
    <property type="project" value="TreeGrafter"/>
</dbReference>
<dbReference type="CDD" id="cd17928">
    <property type="entry name" value="DEXDc_SecA"/>
    <property type="match status" value="1"/>
</dbReference>
<dbReference type="CDD" id="cd18803">
    <property type="entry name" value="SF2_C_secA"/>
    <property type="match status" value="1"/>
</dbReference>
<dbReference type="FunFam" id="1.10.3060.10:FF:000001">
    <property type="entry name" value="Preprotein translocase subunit SecA"/>
    <property type="match status" value="1"/>
</dbReference>
<dbReference type="FunFam" id="3.40.50.300:FF:000081">
    <property type="entry name" value="Preprotein translocase subunit SecA"/>
    <property type="match status" value="1"/>
</dbReference>
<dbReference type="FunFam" id="3.40.50.300:FF:000113">
    <property type="entry name" value="Preprotein translocase subunit SecA"/>
    <property type="match status" value="1"/>
</dbReference>
<dbReference type="FunFam" id="3.90.1440.10:FF:000001">
    <property type="entry name" value="Preprotein translocase subunit SecA"/>
    <property type="match status" value="1"/>
</dbReference>
<dbReference type="Gene3D" id="1.10.3060.10">
    <property type="entry name" value="Helical scaffold and wing domains of SecA"/>
    <property type="match status" value="1"/>
</dbReference>
<dbReference type="Gene3D" id="3.40.50.300">
    <property type="entry name" value="P-loop containing nucleotide triphosphate hydrolases"/>
    <property type="match status" value="2"/>
</dbReference>
<dbReference type="Gene3D" id="3.90.1440.10">
    <property type="entry name" value="SecA, preprotein cross-linking domain"/>
    <property type="match status" value="1"/>
</dbReference>
<dbReference type="HAMAP" id="MF_01382">
    <property type="entry name" value="SecA"/>
    <property type="match status" value="1"/>
</dbReference>
<dbReference type="InterPro" id="IPR014001">
    <property type="entry name" value="Helicase_ATP-bd"/>
</dbReference>
<dbReference type="InterPro" id="IPR001650">
    <property type="entry name" value="Helicase_C-like"/>
</dbReference>
<dbReference type="InterPro" id="IPR027417">
    <property type="entry name" value="P-loop_NTPase"/>
</dbReference>
<dbReference type="InterPro" id="IPR004027">
    <property type="entry name" value="SEC_C_motif"/>
</dbReference>
<dbReference type="InterPro" id="IPR000185">
    <property type="entry name" value="SecA"/>
</dbReference>
<dbReference type="InterPro" id="IPR020937">
    <property type="entry name" value="SecA_CS"/>
</dbReference>
<dbReference type="InterPro" id="IPR011115">
    <property type="entry name" value="SecA_DEAD"/>
</dbReference>
<dbReference type="InterPro" id="IPR014018">
    <property type="entry name" value="SecA_motor_DEAD"/>
</dbReference>
<dbReference type="InterPro" id="IPR011130">
    <property type="entry name" value="SecA_preprotein_X-link_dom"/>
</dbReference>
<dbReference type="InterPro" id="IPR044722">
    <property type="entry name" value="SecA_SF2_C"/>
</dbReference>
<dbReference type="InterPro" id="IPR011116">
    <property type="entry name" value="SecA_Wing/Scaffold"/>
</dbReference>
<dbReference type="InterPro" id="IPR036266">
    <property type="entry name" value="SecA_Wing/Scaffold_sf"/>
</dbReference>
<dbReference type="InterPro" id="IPR036670">
    <property type="entry name" value="SecA_X-link_sf"/>
</dbReference>
<dbReference type="NCBIfam" id="NF009538">
    <property type="entry name" value="PRK12904.1"/>
    <property type="match status" value="1"/>
</dbReference>
<dbReference type="NCBIfam" id="TIGR00963">
    <property type="entry name" value="secA"/>
    <property type="match status" value="1"/>
</dbReference>
<dbReference type="PANTHER" id="PTHR30612:SF0">
    <property type="entry name" value="CHLOROPLAST PROTEIN-TRANSPORTING ATPASE"/>
    <property type="match status" value="1"/>
</dbReference>
<dbReference type="PANTHER" id="PTHR30612">
    <property type="entry name" value="SECA INNER MEMBRANE COMPONENT OF SEC PROTEIN SECRETION SYSTEM"/>
    <property type="match status" value="1"/>
</dbReference>
<dbReference type="Pfam" id="PF21090">
    <property type="entry name" value="P-loop_SecA"/>
    <property type="match status" value="1"/>
</dbReference>
<dbReference type="Pfam" id="PF02810">
    <property type="entry name" value="SEC-C"/>
    <property type="match status" value="1"/>
</dbReference>
<dbReference type="Pfam" id="PF07517">
    <property type="entry name" value="SecA_DEAD"/>
    <property type="match status" value="1"/>
</dbReference>
<dbReference type="Pfam" id="PF01043">
    <property type="entry name" value="SecA_PP_bind"/>
    <property type="match status" value="1"/>
</dbReference>
<dbReference type="Pfam" id="PF07516">
    <property type="entry name" value="SecA_SW"/>
    <property type="match status" value="1"/>
</dbReference>
<dbReference type="PRINTS" id="PR00906">
    <property type="entry name" value="SECA"/>
</dbReference>
<dbReference type="SMART" id="SM00957">
    <property type="entry name" value="SecA_DEAD"/>
    <property type="match status" value="1"/>
</dbReference>
<dbReference type="SMART" id="SM00958">
    <property type="entry name" value="SecA_PP_bind"/>
    <property type="match status" value="1"/>
</dbReference>
<dbReference type="SUPFAM" id="SSF81886">
    <property type="entry name" value="Helical scaffold and wing domains of SecA"/>
    <property type="match status" value="1"/>
</dbReference>
<dbReference type="SUPFAM" id="SSF52540">
    <property type="entry name" value="P-loop containing nucleoside triphosphate hydrolases"/>
    <property type="match status" value="2"/>
</dbReference>
<dbReference type="SUPFAM" id="SSF81767">
    <property type="entry name" value="Pre-protein crosslinking domain of SecA"/>
    <property type="match status" value="1"/>
</dbReference>
<dbReference type="PROSITE" id="PS01312">
    <property type="entry name" value="SECA"/>
    <property type="match status" value="1"/>
</dbReference>
<dbReference type="PROSITE" id="PS51196">
    <property type="entry name" value="SECA_MOTOR_DEAD"/>
    <property type="match status" value="1"/>
</dbReference>
<evidence type="ECO:0000255" key="1">
    <source>
        <dbReference type="HAMAP-Rule" id="MF_01382"/>
    </source>
</evidence>
<evidence type="ECO:0000256" key="2">
    <source>
        <dbReference type="SAM" id="MobiDB-lite"/>
    </source>
</evidence>
<organism>
    <name type="scientific">Escherichia coli O17:K52:H18 (strain UMN026 / ExPEC)</name>
    <dbReference type="NCBI Taxonomy" id="585056"/>
    <lineage>
        <taxon>Bacteria</taxon>
        <taxon>Pseudomonadati</taxon>
        <taxon>Pseudomonadota</taxon>
        <taxon>Gammaproteobacteria</taxon>
        <taxon>Enterobacterales</taxon>
        <taxon>Enterobacteriaceae</taxon>
        <taxon>Escherichia</taxon>
    </lineage>
</organism>
<protein>
    <recommendedName>
        <fullName evidence="1">Protein translocase subunit SecA</fullName>
        <ecNumber evidence="1">7.4.2.8</ecNumber>
    </recommendedName>
</protein>
<sequence length="901" mass="101965">MLIKLLTKVFGSRNDRTLRRMRKVVNIINAMEPEMEKLSDEELKGKTAEFRARLEKGEVLENLIPEAFAVVREASKRVFGMRHFDVQLLGGMVLNERCIAEMRTGEGKTLTATLPAYLNALTGKGVHVVTVNDYLAQRDAENNRPLFEFLGLTVGINLPGMPAPAKREAYAADITYGTNNEYGFDYLRDNMAFSPEERVQRKLHYALVDEVDSILIDEARTPLIISGPAEDSSEMYKRVNKIIPHLIRQEKEDSETFQGEGHFSVDEKSRQVNLTERGLVLIEELLVKEGIMDEGESLYSPANIMLMHHVTAALRAHALFTRDVDYIVKDGEVIIVDEHTGRTMQGRRWSDGLHQAVEAKEGVQIQNENQTLASITFQNYFRLYEKLAGMTGTADTEAFEFSSIYKLDTVVVPTNRPMIRKDLPDLVYMTEAEKIQAIIEDIKERTAKGQPVLVGTISIEKSELVSNELTKAGIKHNVLNAKFHANEAAIVAQAGYPAAVTIATNMAGRGTDIVLGGSWQAEVAALENPTAEQIEKIKADWQVRHDAVLAAGGLHIIGTERHESRRIDNQLRGRSGRQGDAGSSRFYLSMEDALMRIFASDRVSGMMRKLGMKPGEAIEHPWVTKAIANAQRKVESRNFDIRKQLLEYDDVANDQRRAIYSQRNELLDVSDVSETINSIREDVFKATIDAYIPPQSLEEMWDIPGLQERLKNDFDLDLPIAEWLDKEPELHEETLRERILAQSIEVYQRKEEVVGAEMMRHFEKGVMLQTLDSLWKEHLAAMDYLRQGIHLRGYAQKDPKQEYKRESFSMFAAMLESLKYEVISTLSKVQVRMPEEVEELEQQRRMEAERLAQMQQLSHQDDDSAAAAALAAQTGERKVGRNDPCPCGSGKKYKQCHGRLQ</sequence>
<keyword id="KW-0067">ATP-binding</keyword>
<keyword id="KW-0997">Cell inner membrane</keyword>
<keyword id="KW-1003">Cell membrane</keyword>
<keyword id="KW-0963">Cytoplasm</keyword>
<keyword id="KW-0472">Membrane</keyword>
<keyword id="KW-0479">Metal-binding</keyword>
<keyword id="KW-0547">Nucleotide-binding</keyword>
<keyword id="KW-0653">Protein transport</keyword>
<keyword id="KW-1278">Translocase</keyword>
<keyword id="KW-0811">Translocation</keyword>
<keyword id="KW-0813">Transport</keyword>
<keyword id="KW-0862">Zinc</keyword>
<reference key="1">
    <citation type="journal article" date="2009" name="PLoS Genet.">
        <title>Organised genome dynamics in the Escherichia coli species results in highly diverse adaptive paths.</title>
        <authorList>
            <person name="Touchon M."/>
            <person name="Hoede C."/>
            <person name="Tenaillon O."/>
            <person name="Barbe V."/>
            <person name="Baeriswyl S."/>
            <person name="Bidet P."/>
            <person name="Bingen E."/>
            <person name="Bonacorsi S."/>
            <person name="Bouchier C."/>
            <person name="Bouvet O."/>
            <person name="Calteau A."/>
            <person name="Chiapello H."/>
            <person name="Clermont O."/>
            <person name="Cruveiller S."/>
            <person name="Danchin A."/>
            <person name="Diard M."/>
            <person name="Dossat C."/>
            <person name="Karoui M.E."/>
            <person name="Frapy E."/>
            <person name="Garry L."/>
            <person name="Ghigo J.M."/>
            <person name="Gilles A.M."/>
            <person name="Johnson J."/>
            <person name="Le Bouguenec C."/>
            <person name="Lescat M."/>
            <person name="Mangenot S."/>
            <person name="Martinez-Jehanne V."/>
            <person name="Matic I."/>
            <person name="Nassif X."/>
            <person name="Oztas S."/>
            <person name="Petit M.A."/>
            <person name="Pichon C."/>
            <person name="Rouy Z."/>
            <person name="Ruf C.S."/>
            <person name="Schneider D."/>
            <person name="Tourret J."/>
            <person name="Vacherie B."/>
            <person name="Vallenet D."/>
            <person name="Medigue C."/>
            <person name="Rocha E.P.C."/>
            <person name="Denamur E."/>
        </authorList>
    </citation>
    <scope>NUCLEOTIDE SEQUENCE [LARGE SCALE GENOMIC DNA]</scope>
    <source>
        <strain>UMN026 / ExPEC</strain>
    </source>
</reference>
<feature type="chain" id="PRO_1000145010" description="Protein translocase subunit SecA">
    <location>
        <begin position="1"/>
        <end position="901"/>
    </location>
</feature>
<feature type="region of interest" description="Disordered" evidence="2">
    <location>
        <begin position="859"/>
        <end position="901"/>
    </location>
</feature>
<feature type="compositionally biased region" description="Basic residues" evidence="2">
    <location>
        <begin position="891"/>
        <end position="901"/>
    </location>
</feature>
<feature type="binding site" evidence="1">
    <location>
        <position position="87"/>
    </location>
    <ligand>
        <name>ATP</name>
        <dbReference type="ChEBI" id="CHEBI:30616"/>
    </ligand>
</feature>
<feature type="binding site" evidence="1">
    <location>
        <begin position="105"/>
        <end position="109"/>
    </location>
    <ligand>
        <name>ATP</name>
        <dbReference type="ChEBI" id="CHEBI:30616"/>
    </ligand>
</feature>
<feature type="binding site" evidence="1">
    <location>
        <position position="512"/>
    </location>
    <ligand>
        <name>ATP</name>
        <dbReference type="ChEBI" id="CHEBI:30616"/>
    </ligand>
</feature>
<feature type="binding site" evidence="1">
    <location>
        <position position="885"/>
    </location>
    <ligand>
        <name>Zn(2+)</name>
        <dbReference type="ChEBI" id="CHEBI:29105"/>
    </ligand>
</feature>
<feature type="binding site" evidence="1">
    <location>
        <position position="887"/>
    </location>
    <ligand>
        <name>Zn(2+)</name>
        <dbReference type="ChEBI" id="CHEBI:29105"/>
    </ligand>
</feature>
<feature type="binding site" evidence="1">
    <location>
        <position position="896"/>
    </location>
    <ligand>
        <name>Zn(2+)</name>
        <dbReference type="ChEBI" id="CHEBI:29105"/>
    </ligand>
</feature>
<feature type="binding site" evidence="1">
    <location>
        <position position="897"/>
    </location>
    <ligand>
        <name>Zn(2+)</name>
        <dbReference type="ChEBI" id="CHEBI:29105"/>
    </ligand>
</feature>
<accession>B7N7X1</accession>
<comment type="function">
    <text evidence="1">Part of the Sec protein translocase complex. Interacts with the SecYEG preprotein conducting channel. Has a central role in coupling the hydrolysis of ATP to the transfer of proteins into and across the cell membrane, serving both as a receptor for the preprotein-SecB complex and as an ATP-driven molecular motor driving the stepwise translocation of polypeptide chains across the membrane.</text>
</comment>
<comment type="catalytic activity">
    <reaction evidence="1">
        <text>ATP + H2O + cellular proteinSide 1 = ADP + phosphate + cellular proteinSide 2.</text>
        <dbReference type="EC" id="7.4.2.8"/>
    </reaction>
</comment>
<comment type="cofactor">
    <cofactor evidence="1">
        <name>Zn(2+)</name>
        <dbReference type="ChEBI" id="CHEBI:29105"/>
    </cofactor>
    <text evidence="1">May bind 1 zinc ion per subunit.</text>
</comment>
<comment type="subunit">
    <text evidence="1">Monomer and homodimer. Part of the essential Sec protein translocation apparatus which comprises SecA, SecYEG and auxiliary proteins SecDF-YajC and YidC.</text>
</comment>
<comment type="subcellular location">
    <subcellularLocation>
        <location evidence="1">Cell inner membrane</location>
        <topology evidence="1">Peripheral membrane protein</topology>
        <orientation evidence="1">Cytoplasmic side</orientation>
    </subcellularLocation>
    <subcellularLocation>
        <location evidence="1">Cytoplasm</location>
    </subcellularLocation>
    <text evidence="1">Distribution is 50-50.</text>
</comment>
<comment type="induction">
    <text evidence="1">Repressed under conditions of excess protein secretion capacity and derepressed when protein secretion becomes limiting. This is regulated by SecM.</text>
</comment>
<comment type="similarity">
    <text evidence="1">Belongs to the SecA family.</text>
</comment>
<gene>
    <name evidence="1" type="primary">secA</name>
    <name type="ordered locus">ECUMN_0098</name>
</gene>